<accession>A8GI73</accession>
<reference key="1">
    <citation type="submission" date="2007-09" db="EMBL/GenBank/DDBJ databases">
        <title>Complete sequence of chromosome of Serratia proteamaculans 568.</title>
        <authorList>
            <consortium name="US DOE Joint Genome Institute"/>
            <person name="Copeland A."/>
            <person name="Lucas S."/>
            <person name="Lapidus A."/>
            <person name="Barry K."/>
            <person name="Glavina del Rio T."/>
            <person name="Dalin E."/>
            <person name="Tice H."/>
            <person name="Pitluck S."/>
            <person name="Chain P."/>
            <person name="Malfatti S."/>
            <person name="Shin M."/>
            <person name="Vergez L."/>
            <person name="Schmutz J."/>
            <person name="Larimer F."/>
            <person name="Land M."/>
            <person name="Hauser L."/>
            <person name="Kyrpides N."/>
            <person name="Kim E."/>
            <person name="Taghavi S."/>
            <person name="Newman L."/>
            <person name="Vangronsveld J."/>
            <person name="van der Lelie D."/>
            <person name="Richardson P."/>
        </authorList>
    </citation>
    <scope>NUCLEOTIDE SEQUENCE [LARGE SCALE GENOMIC DNA]</scope>
    <source>
        <strain>568</strain>
    </source>
</reference>
<comment type="function">
    <text evidence="1">Required for growth and/or survival at acidic conditions.</text>
</comment>
<comment type="subcellular location">
    <subcellularLocation>
        <location evidence="1">Periplasm</location>
    </subcellularLocation>
</comment>
<comment type="PTM">
    <text evidence="1">Proteolytic processing gives rise to the active protein.</text>
</comment>
<comment type="similarity">
    <text evidence="1">Belongs to the Asr family.</text>
</comment>
<dbReference type="EMBL" id="CP000826">
    <property type="protein sequence ID" value="ABV42813.1"/>
    <property type="molecule type" value="Genomic_DNA"/>
</dbReference>
<dbReference type="KEGG" id="spe:Spro_3717"/>
<dbReference type="eggNOG" id="ENOG5032U9T">
    <property type="taxonomic scope" value="Bacteria"/>
</dbReference>
<dbReference type="HOGENOM" id="CLU_102486_1_1_6"/>
<dbReference type="GO" id="GO:0042597">
    <property type="term" value="C:periplasmic space"/>
    <property type="evidence" value="ECO:0007669"/>
    <property type="project" value="UniProtKB-SubCell"/>
</dbReference>
<dbReference type="HAMAP" id="MF_00546">
    <property type="entry name" value="Asr"/>
    <property type="match status" value="1"/>
</dbReference>
<dbReference type="InterPro" id="IPR023497">
    <property type="entry name" value="Acid_shock"/>
</dbReference>
<dbReference type="NCBIfam" id="NF033636">
    <property type="entry name" value="acid_shock_Asr"/>
    <property type="match status" value="1"/>
</dbReference>
<dbReference type="Pfam" id="PF06392">
    <property type="entry name" value="Asr"/>
    <property type="match status" value="1"/>
</dbReference>
<protein>
    <recommendedName>
        <fullName evidence="1">Acid shock protein</fullName>
    </recommendedName>
</protein>
<gene>
    <name evidence="1" type="primary">asr</name>
    <name type="ordered locus">Spro_3717</name>
</gene>
<feature type="signal peptide" evidence="1">
    <location>
        <begin position="1"/>
        <end position="21"/>
    </location>
</feature>
<feature type="propeptide" id="PRO_1000061076" evidence="1">
    <location>
        <begin position="22"/>
        <end position="85"/>
    </location>
</feature>
<feature type="chain" id="PRO_1000061077" description="Acid shock protein">
    <location>
        <begin position="86"/>
        <end position="138"/>
    </location>
</feature>
<feature type="region of interest" description="Disordered" evidence="2">
    <location>
        <begin position="31"/>
        <end position="138"/>
    </location>
</feature>
<feature type="compositionally biased region" description="Low complexity" evidence="2">
    <location>
        <begin position="31"/>
        <end position="50"/>
    </location>
</feature>
<feature type="compositionally biased region" description="Basic residues" evidence="2">
    <location>
        <begin position="51"/>
        <end position="77"/>
    </location>
</feature>
<feature type="compositionally biased region" description="Basic residues" evidence="2">
    <location>
        <begin position="122"/>
        <end position="131"/>
    </location>
</feature>
<organism>
    <name type="scientific">Serratia proteamaculans (strain 568)</name>
    <dbReference type="NCBI Taxonomy" id="399741"/>
    <lineage>
        <taxon>Bacteria</taxon>
        <taxon>Pseudomonadati</taxon>
        <taxon>Pseudomonadota</taxon>
        <taxon>Gammaproteobacteria</taxon>
        <taxon>Enterobacterales</taxon>
        <taxon>Yersiniaceae</taxon>
        <taxon>Serratia</taxon>
    </lineage>
</organism>
<name>ASR_SERP5</name>
<evidence type="ECO:0000255" key="1">
    <source>
        <dbReference type="HAMAP-Rule" id="MF_00546"/>
    </source>
</evidence>
<evidence type="ECO:0000256" key="2">
    <source>
        <dbReference type="SAM" id="MobiDB-lite"/>
    </source>
</evidence>
<proteinExistence type="inferred from homology"/>
<keyword id="KW-0574">Periplasm</keyword>
<keyword id="KW-0732">Signal</keyword>
<sequence length="138" mass="13853">MKKVLALIVAATMGLSSVAFAADAVAPAAAAPAATTTAAPAAAATKAPAKATHHKKAHKKAPAQKAQAAKKHHKATKKAPAQKAQAAKKHHKATKAAPAQKAQAAKKHHKATKPAAAQKAQAAKKHHKATKKAAPAAK</sequence>